<protein>
    <recommendedName>
        <fullName>Uncharacterized protein C1604.06c</fullName>
    </recommendedName>
</protein>
<comment type="subcellular location">
    <subcellularLocation>
        <location evidence="2">Membrane</location>
        <topology evidence="2">Multi-pass membrane protein</topology>
    </subcellularLocation>
</comment>
<comment type="similarity">
    <text evidence="2">Belongs to the CBF/MAK21 family.</text>
</comment>
<reference key="1">
    <citation type="journal article" date="2002" name="Nature">
        <title>The genome sequence of Schizosaccharomyces pombe.</title>
        <authorList>
            <person name="Wood V."/>
            <person name="Gwilliam R."/>
            <person name="Rajandream M.A."/>
            <person name="Lyne M.H."/>
            <person name="Lyne R."/>
            <person name="Stewart A."/>
            <person name="Sgouros J.G."/>
            <person name="Peat N."/>
            <person name="Hayles J."/>
            <person name="Baker S.G."/>
            <person name="Basham D."/>
            <person name="Bowman S."/>
            <person name="Brooks K."/>
            <person name="Brown D."/>
            <person name="Brown S."/>
            <person name="Chillingworth T."/>
            <person name="Churcher C.M."/>
            <person name="Collins M."/>
            <person name="Connor R."/>
            <person name="Cronin A."/>
            <person name="Davis P."/>
            <person name="Feltwell T."/>
            <person name="Fraser A."/>
            <person name="Gentles S."/>
            <person name="Goble A."/>
            <person name="Hamlin N."/>
            <person name="Harris D.E."/>
            <person name="Hidalgo J."/>
            <person name="Hodgson G."/>
            <person name="Holroyd S."/>
            <person name="Hornsby T."/>
            <person name="Howarth S."/>
            <person name="Huckle E.J."/>
            <person name="Hunt S."/>
            <person name="Jagels K."/>
            <person name="James K.D."/>
            <person name="Jones L."/>
            <person name="Jones M."/>
            <person name="Leather S."/>
            <person name="McDonald S."/>
            <person name="McLean J."/>
            <person name="Mooney P."/>
            <person name="Moule S."/>
            <person name="Mungall K.L."/>
            <person name="Murphy L.D."/>
            <person name="Niblett D."/>
            <person name="Odell C."/>
            <person name="Oliver K."/>
            <person name="O'Neil S."/>
            <person name="Pearson D."/>
            <person name="Quail M.A."/>
            <person name="Rabbinowitsch E."/>
            <person name="Rutherford K.M."/>
            <person name="Rutter S."/>
            <person name="Saunders D."/>
            <person name="Seeger K."/>
            <person name="Sharp S."/>
            <person name="Skelton J."/>
            <person name="Simmonds M.N."/>
            <person name="Squares R."/>
            <person name="Squares S."/>
            <person name="Stevens K."/>
            <person name="Taylor K."/>
            <person name="Taylor R.G."/>
            <person name="Tivey A."/>
            <person name="Walsh S.V."/>
            <person name="Warren T."/>
            <person name="Whitehead S."/>
            <person name="Woodward J.R."/>
            <person name="Volckaert G."/>
            <person name="Aert R."/>
            <person name="Robben J."/>
            <person name="Grymonprez B."/>
            <person name="Weltjens I."/>
            <person name="Vanstreels E."/>
            <person name="Rieger M."/>
            <person name="Schaefer M."/>
            <person name="Mueller-Auer S."/>
            <person name="Gabel C."/>
            <person name="Fuchs M."/>
            <person name="Duesterhoeft A."/>
            <person name="Fritzc C."/>
            <person name="Holzer E."/>
            <person name="Moestl D."/>
            <person name="Hilbert H."/>
            <person name="Borzym K."/>
            <person name="Langer I."/>
            <person name="Beck A."/>
            <person name="Lehrach H."/>
            <person name="Reinhardt R."/>
            <person name="Pohl T.M."/>
            <person name="Eger P."/>
            <person name="Zimmermann W."/>
            <person name="Wedler H."/>
            <person name="Wambutt R."/>
            <person name="Purnelle B."/>
            <person name="Goffeau A."/>
            <person name="Cadieu E."/>
            <person name="Dreano S."/>
            <person name="Gloux S."/>
            <person name="Lelaure V."/>
            <person name="Mottier S."/>
            <person name="Galibert F."/>
            <person name="Aves S.J."/>
            <person name="Xiang Z."/>
            <person name="Hunt C."/>
            <person name="Moore K."/>
            <person name="Hurst S.M."/>
            <person name="Lucas M."/>
            <person name="Rochet M."/>
            <person name="Gaillardin C."/>
            <person name="Tallada V.A."/>
            <person name="Garzon A."/>
            <person name="Thode G."/>
            <person name="Daga R.R."/>
            <person name="Cruzado L."/>
            <person name="Jimenez J."/>
            <person name="Sanchez M."/>
            <person name="del Rey F."/>
            <person name="Benito J."/>
            <person name="Dominguez A."/>
            <person name="Revuelta J.L."/>
            <person name="Moreno S."/>
            <person name="Armstrong J."/>
            <person name="Forsburg S.L."/>
            <person name="Cerutti L."/>
            <person name="Lowe T."/>
            <person name="McCombie W.R."/>
            <person name="Paulsen I."/>
            <person name="Potashkin J."/>
            <person name="Shpakovski G.V."/>
            <person name="Ussery D."/>
            <person name="Barrell B.G."/>
            <person name="Nurse P."/>
        </authorList>
    </citation>
    <scope>NUCLEOTIDE SEQUENCE [LARGE SCALE GENOMIC DNA]</scope>
    <source>
        <strain>972 / ATCC 24843</strain>
    </source>
</reference>
<feature type="chain" id="PRO_0000310338" description="Uncharacterized protein C1604.06c">
    <location>
        <begin position="1"/>
        <end position="485"/>
    </location>
</feature>
<feature type="transmembrane region" description="Helical" evidence="1">
    <location>
        <begin position="284"/>
        <end position="304"/>
    </location>
</feature>
<feature type="transmembrane region" description="Helical" evidence="1">
    <location>
        <begin position="328"/>
        <end position="348"/>
    </location>
</feature>
<feature type="transmembrane region" description="Helical" evidence="1">
    <location>
        <begin position="353"/>
        <end position="373"/>
    </location>
</feature>
<evidence type="ECO:0000255" key="1"/>
<evidence type="ECO:0000305" key="2"/>
<dbReference type="EMBL" id="CU329671">
    <property type="protein sequence ID" value="CAA22339.1"/>
    <property type="molecule type" value="Genomic_DNA"/>
</dbReference>
<dbReference type="PIR" id="T39508">
    <property type="entry name" value="T39508"/>
</dbReference>
<dbReference type="SMR" id="O94372"/>
<dbReference type="BioGRID" id="276531">
    <property type="interactions" value="3"/>
</dbReference>
<dbReference type="FunCoup" id="O94372">
    <property type="interactions" value="525"/>
</dbReference>
<dbReference type="IntAct" id="O94372">
    <property type="interactions" value="1"/>
</dbReference>
<dbReference type="STRING" id="284812.O94372"/>
<dbReference type="PaxDb" id="4896-SPBC1604.06c.1"/>
<dbReference type="EnsemblFungi" id="SPBC1604.06c.1">
    <property type="protein sequence ID" value="SPBC1604.06c.1:pep"/>
    <property type="gene ID" value="SPBC1604.06c"/>
</dbReference>
<dbReference type="KEGG" id="spo:2539987"/>
<dbReference type="PomBase" id="SPBC1604.06c"/>
<dbReference type="VEuPathDB" id="FungiDB:SPBC1604.06c"/>
<dbReference type="eggNOG" id="KOG2154">
    <property type="taxonomic scope" value="Eukaryota"/>
</dbReference>
<dbReference type="HOGENOM" id="CLU_015945_1_0_1"/>
<dbReference type="InParanoid" id="O94372"/>
<dbReference type="OMA" id="TDAYNSH"/>
<dbReference type="PhylomeDB" id="O94372"/>
<dbReference type="Reactome" id="R-SPO-6791226">
    <property type="pathway name" value="Major pathway of rRNA processing in the nucleolus and cytosol"/>
</dbReference>
<dbReference type="PRO" id="PR:O94372"/>
<dbReference type="Proteomes" id="UP000002485">
    <property type="component" value="Chromosome II"/>
</dbReference>
<dbReference type="GO" id="GO:0016020">
    <property type="term" value="C:membrane"/>
    <property type="evidence" value="ECO:0007669"/>
    <property type="project" value="UniProtKB-SubCell"/>
</dbReference>
<dbReference type="GO" id="GO:0030692">
    <property type="term" value="C:Noc4p-Nop14p complex"/>
    <property type="evidence" value="ECO:0000318"/>
    <property type="project" value="GO_Central"/>
</dbReference>
<dbReference type="GO" id="GO:0005730">
    <property type="term" value="C:nucleolus"/>
    <property type="evidence" value="ECO:0000318"/>
    <property type="project" value="GO_Central"/>
</dbReference>
<dbReference type="GO" id="GO:0032040">
    <property type="term" value="C:small-subunit processome"/>
    <property type="evidence" value="ECO:0000318"/>
    <property type="project" value="GO_Central"/>
</dbReference>
<dbReference type="GO" id="GO:0006364">
    <property type="term" value="P:rRNA processing"/>
    <property type="evidence" value="ECO:0000266"/>
    <property type="project" value="PomBase"/>
</dbReference>
<dbReference type="InterPro" id="IPR005612">
    <property type="entry name" value="CCAAT-binding_factor"/>
</dbReference>
<dbReference type="InterPro" id="IPR027193">
    <property type="entry name" value="Noc4"/>
</dbReference>
<dbReference type="PANTHER" id="PTHR12455">
    <property type="entry name" value="NUCLEOLAR COMPLEX PROTEIN 4"/>
    <property type="match status" value="1"/>
</dbReference>
<dbReference type="PANTHER" id="PTHR12455:SF0">
    <property type="entry name" value="NUCLEOLAR COMPLEX PROTEIN 4 HOMOLOG"/>
    <property type="match status" value="1"/>
</dbReference>
<dbReference type="Pfam" id="PF03914">
    <property type="entry name" value="CBF"/>
    <property type="match status" value="1"/>
</dbReference>
<gene>
    <name type="ORF">SPBC1604.06c</name>
</gene>
<proteinExistence type="inferred from homology"/>
<organism>
    <name type="scientific">Schizosaccharomyces pombe (strain 972 / ATCC 24843)</name>
    <name type="common">Fission yeast</name>
    <dbReference type="NCBI Taxonomy" id="284812"/>
    <lineage>
        <taxon>Eukaryota</taxon>
        <taxon>Fungi</taxon>
        <taxon>Dikarya</taxon>
        <taxon>Ascomycota</taxon>
        <taxon>Taphrinomycotina</taxon>
        <taxon>Schizosaccharomycetes</taxon>
        <taxon>Schizosaccharomycetales</taxon>
        <taxon>Schizosaccharomycetaceae</taxon>
        <taxon>Schizosaccharomyces</taxon>
    </lineage>
</organism>
<name>YG06_SCHPO</name>
<sequence length="485" mass="55405">MIKDLENEIYKSRKNLNNILVLFDYIDLSNHSIDEVNDAAAALCRVYCYLSRNGLLKRPKEDDSSANAQVKNWVCDNYINYTEKLTEIFSMANVEALQVSFLTMTMRLCKAESQMDENGTFRNQFYIRFCLELLSSSQLSDICIKDFVTSYLVPYDDVRFFFYKNSKKVISSLIESSKTDDPMANLDIVAFNTIRILSAIPSPLPSSSTSSWADEPSPSSTETSSIKRAFQESWLSALSLPLSVNLYKQVLNVIHKRVIPFLQKPNLLMDFLTDAYNSHHAVSLLALNGLFTLMISHNLDYPLFYPKLYALLDRNLLYLKTRSRFFRLLDLFLSSTHLPATLIASFIKRLARLALTAPPGAIAIVIPFIYNCLQRHPTCMQMLHRSSAESGDSFDFDQPDPLLTGAIESSLWELSTLQNHYYSNIASLASIMSQKFTKPRYELEDFLDHGYATMCDAELRRPLKNEPPIEFEKRTLASGLEKSWI</sequence>
<keyword id="KW-0472">Membrane</keyword>
<keyword id="KW-1185">Reference proteome</keyword>
<keyword id="KW-0812">Transmembrane</keyword>
<keyword id="KW-1133">Transmembrane helix</keyword>
<accession>O94372</accession>